<name>RH38_ARATH</name>
<keyword id="KW-0007">Acetylation</keyword>
<keyword id="KW-0067">ATP-binding</keyword>
<keyword id="KW-0963">Cytoplasm</keyword>
<keyword id="KW-0347">Helicase</keyword>
<keyword id="KW-0378">Hydrolase</keyword>
<keyword id="KW-0509">mRNA transport</keyword>
<keyword id="KW-0547">Nucleotide-binding</keyword>
<keyword id="KW-0539">Nucleus</keyword>
<keyword id="KW-1185">Reference proteome</keyword>
<keyword id="KW-0694">RNA-binding</keyword>
<keyword id="KW-0813">Transport</keyword>
<proteinExistence type="evidence at protein level"/>
<feature type="initiator methionine" description="Removed" evidence="8">
    <location>
        <position position="1"/>
    </location>
</feature>
<feature type="chain" id="PRO_0000239178" description="DEAD-box ATP-dependent RNA helicase 38">
    <location>
        <begin position="2"/>
        <end position="496"/>
    </location>
</feature>
<feature type="domain" description="Helicase ATP-binding" evidence="1">
    <location>
        <begin position="125"/>
        <end position="301"/>
    </location>
</feature>
<feature type="domain" description="Helicase C-terminal" evidence="2">
    <location>
        <begin position="329"/>
        <end position="483"/>
    </location>
</feature>
<feature type="region of interest" description="Disordered" evidence="3">
    <location>
        <begin position="1"/>
        <end position="91"/>
    </location>
</feature>
<feature type="short sequence motif" description="Q motif">
    <location>
        <begin position="91"/>
        <end position="120"/>
    </location>
</feature>
<feature type="short sequence motif" description="DEAD box">
    <location>
        <begin position="245"/>
        <end position="248"/>
    </location>
</feature>
<feature type="compositionally biased region" description="Low complexity" evidence="3">
    <location>
        <begin position="7"/>
        <end position="25"/>
    </location>
</feature>
<feature type="compositionally biased region" description="Basic and acidic residues" evidence="3">
    <location>
        <begin position="27"/>
        <end position="40"/>
    </location>
</feature>
<feature type="compositionally biased region" description="Acidic residues" evidence="3">
    <location>
        <begin position="41"/>
        <end position="51"/>
    </location>
</feature>
<feature type="compositionally biased region" description="Polar residues" evidence="3">
    <location>
        <begin position="78"/>
        <end position="91"/>
    </location>
</feature>
<feature type="binding site" evidence="1">
    <location>
        <begin position="138"/>
        <end position="145"/>
    </location>
    <ligand>
        <name>ATP</name>
        <dbReference type="ChEBI" id="CHEBI:30616"/>
    </ligand>
</feature>
<feature type="modified residue" description="N-acetylalanine" evidence="8">
    <location>
        <position position="2"/>
    </location>
</feature>
<feature type="sequence conflict" description="In Ref. 3; AAL09787." evidence="7" ref="3">
    <original>R</original>
    <variation>I</variation>
    <location>
        <position position="437"/>
    </location>
</feature>
<protein>
    <recommendedName>
        <fullName>DEAD-box ATP-dependent RNA helicase 38</fullName>
        <ecNumber>3.6.4.13</ecNumber>
    </recommendedName>
    <alternativeName>
        <fullName>Low expression of osmotically-responsive genes 4 protein</fullName>
    </alternativeName>
    <alternativeName>
        <fullName>Protein CRYOPHYTE</fullName>
    </alternativeName>
</protein>
<sequence length="496" mass="55384">MADTVEKVPTVVESSSSSTVEASNSAEKTEPTTEKKKWGDVEDDDDEEEAVSELNSLSIKEEEKPDSILEEPEDSNIKAVTSGDTPYTSASRFEDLNLSPELMKGLYVEMKFEKPSKIQAISLPMIMTPPHKHLIAQAHNGSGKTTCFVLGMLSRVDPTLREPQALCICPTRELANQNMEVLQKMGKFTGITAELAVPDSTRGAPAATRGAPVSAHVVIGTPGTLKKWMAFKRLGLNHLKILVFDEADHMLATDGFRDDSLKIMKDIGRVNPNFQVLLFSATFNETVKDFVARTVKDPNQLFVKREDLALDSVKQYKVVCPKEQNKIEVIKDQIMELGDIGQTIIFVKTKASAQKVHKALAEMGYDVTSVHGNLTESDRDKIVKEFKECLTQVLIATDVIARGFDQQRVNLVVNYNLPTKYETGEPDYEVYLHRVGRAGRFGRKGAVFNLLLDDGWDKEVMEKIEKYFEANVKEIKSWNSEEEYKSALKEAGLLDE</sequence>
<dbReference type="EC" id="3.6.4.13"/>
<dbReference type="EMBL" id="AL132958">
    <property type="protein sequence ID" value="CAB64214.1"/>
    <property type="molecule type" value="Genomic_DNA"/>
</dbReference>
<dbReference type="EMBL" id="CP002686">
    <property type="protein sequence ID" value="AEE79038.1"/>
    <property type="molecule type" value="Genomic_DNA"/>
</dbReference>
<dbReference type="EMBL" id="AY057548">
    <property type="protein sequence ID" value="AAL09787.1"/>
    <property type="molecule type" value="mRNA"/>
</dbReference>
<dbReference type="EMBL" id="BT002444">
    <property type="protein sequence ID" value="AAO00804.1"/>
    <property type="molecule type" value="mRNA"/>
</dbReference>
<dbReference type="EMBL" id="BT008867">
    <property type="protein sequence ID" value="AAP68306.1"/>
    <property type="molecule type" value="mRNA"/>
</dbReference>
<dbReference type="PIR" id="T46157">
    <property type="entry name" value="T46157"/>
</dbReference>
<dbReference type="RefSeq" id="NP_190879.1">
    <property type="nucleotide sequence ID" value="NM_115171.3"/>
</dbReference>
<dbReference type="SMR" id="Q93ZG7"/>
<dbReference type="BioGRID" id="9794">
    <property type="interactions" value="5"/>
</dbReference>
<dbReference type="FunCoup" id="Q93ZG7">
    <property type="interactions" value="3983"/>
</dbReference>
<dbReference type="STRING" id="3702.Q93ZG7"/>
<dbReference type="iPTMnet" id="Q93ZG7"/>
<dbReference type="MetOSite" id="Q93ZG7"/>
<dbReference type="PaxDb" id="3702-AT3G53110.1"/>
<dbReference type="ProteomicsDB" id="236244"/>
<dbReference type="EnsemblPlants" id="AT3G53110.1">
    <property type="protein sequence ID" value="AT3G53110.1"/>
    <property type="gene ID" value="AT3G53110"/>
</dbReference>
<dbReference type="GeneID" id="824477"/>
<dbReference type="Gramene" id="AT3G53110.1">
    <property type="protein sequence ID" value="AT3G53110.1"/>
    <property type="gene ID" value="AT3G53110"/>
</dbReference>
<dbReference type="KEGG" id="ath:AT3G53110"/>
<dbReference type="Araport" id="AT3G53110"/>
<dbReference type="TAIR" id="AT3G53110">
    <property type="gene designation" value="LOS4"/>
</dbReference>
<dbReference type="eggNOG" id="KOG0332">
    <property type="taxonomic scope" value="Eukaryota"/>
</dbReference>
<dbReference type="HOGENOM" id="CLU_003041_1_0_1"/>
<dbReference type="InParanoid" id="Q93ZG7"/>
<dbReference type="OMA" id="DFKNLCM"/>
<dbReference type="PhylomeDB" id="Q93ZG7"/>
<dbReference type="CD-CODE" id="4299E36E">
    <property type="entry name" value="Nucleolus"/>
</dbReference>
<dbReference type="PRO" id="PR:Q93ZG7"/>
<dbReference type="Proteomes" id="UP000006548">
    <property type="component" value="Chromosome 3"/>
</dbReference>
<dbReference type="ExpressionAtlas" id="Q93ZG7">
    <property type="expression patterns" value="baseline and differential"/>
</dbReference>
<dbReference type="GO" id="GO:0005737">
    <property type="term" value="C:cytoplasm"/>
    <property type="evidence" value="ECO:0000314"/>
    <property type="project" value="TAIR"/>
</dbReference>
<dbReference type="GO" id="GO:0005829">
    <property type="term" value="C:cytosol"/>
    <property type="evidence" value="ECO:0007005"/>
    <property type="project" value="TAIR"/>
</dbReference>
<dbReference type="GO" id="GO:0005635">
    <property type="term" value="C:nuclear envelope"/>
    <property type="evidence" value="ECO:0000314"/>
    <property type="project" value="TAIR"/>
</dbReference>
<dbReference type="GO" id="GO:0005524">
    <property type="term" value="F:ATP binding"/>
    <property type="evidence" value="ECO:0007669"/>
    <property type="project" value="UniProtKB-KW"/>
</dbReference>
<dbReference type="GO" id="GO:0016887">
    <property type="term" value="F:ATP hydrolysis activity"/>
    <property type="evidence" value="ECO:0007669"/>
    <property type="project" value="RHEA"/>
</dbReference>
<dbReference type="GO" id="GO:0008186">
    <property type="term" value="F:ATP-dependent activity, acting on RNA"/>
    <property type="evidence" value="ECO:0000314"/>
    <property type="project" value="TAIR"/>
</dbReference>
<dbReference type="GO" id="GO:0003729">
    <property type="term" value="F:mRNA binding"/>
    <property type="evidence" value="ECO:0000314"/>
    <property type="project" value="TAIR"/>
</dbReference>
<dbReference type="GO" id="GO:0003724">
    <property type="term" value="F:RNA helicase activity"/>
    <property type="evidence" value="ECO:0000250"/>
    <property type="project" value="TAIR"/>
</dbReference>
<dbReference type="GO" id="GO:0016973">
    <property type="term" value="P:poly(A)+ mRNA export from nucleus"/>
    <property type="evidence" value="ECO:0000314"/>
    <property type="project" value="TAIR"/>
</dbReference>
<dbReference type="GO" id="GO:0009737">
    <property type="term" value="P:response to abscisic acid"/>
    <property type="evidence" value="ECO:0000315"/>
    <property type="project" value="TAIR"/>
</dbReference>
<dbReference type="GO" id="GO:0009409">
    <property type="term" value="P:response to cold"/>
    <property type="evidence" value="ECO:0000315"/>
    <property type="project" value="TAIR"/>
</dbReference>
<dbReference type="GO" id="GO:0009408">
    <property type="term" value="P:response to heat"/>
    <property type="evidence" value="ECO:0000315"/>
    <property type="project" value="TAIR"/>
</dbReference>
<dbReference type="CDD" id="cd17963">
    <property type="entry name" value="DEADc_DDX19_DDX25"/>
    <property type="match status" value="1"/>
</dbReference>
<dbReference type="CDD" id="cd18787">
    <property type="entry name" value="SF2_C_DEAD"/>
    <property type="match status" value="1"/>
</dbReference>
<dbReference type="FunFam" id="3.40.50.300:FF:003372">
    <property type="entry name" value="DEAD-box ATP-dependent RNA helicase 38"/>
    <property type="match status" value="1"/>
</dbReference>
<dbReference type="FunFam" id="3.40.50.300:FF:004014">
    <property type="entry name" value="DEAD-box ATP-dependent RNA helicase 38"/>
    <property type="match status" value="1"/>
</dbReference>
<dbReference type="Gene3D" id="3.40.50.300">
    <property type="entry name" value="P-loop containing nucleotide triphosphate hydrolases"/>
    <property type="match status" value="2"/>
</dbReference>
<dbReference type="InterPro" id="IPR011545">
    <property type="entry name" value="DEAD/DEAH_box_helicase_dom"/>
</dbReference>
<dbReference type="InterPro" id="IPR014001">
    <property type="entry name" value="Helicase_ATP-bd"/>
</dbReference>
<dbReference type="InterPro" id="IPR001650">
    <property type="entry name" value="Helicase_C-like"/>
</dbReference>
<dbReference type="InterPro" id="IPR027417">
    <property type="entry name" value="P-loop_NTPase"/>
</dbReference>
<dbReference type="InterPro" id="IPR014014">
    <property type="entry name" value="RNA_helicase_DEAD_Q_motif"/>
</dbReference>
<dbReference type="PANTHER" id="PTHR47958">
    <property type="entry name" value="ATP-DEPENDENT RNA HELICASE DBP3"/>
    <property type="match status" value="1"/>
</dbReference>
<dbReference type="Pfam" id="PF00270">
    <property type="entry name" value="DEAD"/>
    <property type="match status" value="1"/>
</dbReference>
<dbReference type="Pfam" id="PF00271">
    <property type="entry name" value="Helicase_C"/>
    <property type="match status" value="1"/>
</dbReference>
<dbReference type="SMART" id="SM00487">
    <property type="entry name" value="DEXDc"/>
    <property type="match status" value="1"/>
</dbReference>
<dbReference type="SMART" id="SM00490">
    <property type="entry name" value="HELICc"/>
    <property type="match status" value="1"/>
</dbReference>
<dbReference type="SUPFAM" id="SSF52540">
    <property type="entry name" value="P-loop containing nucleoside triphosphate hydrolases"/>
    <property type="match status" value="1"/>
</dbReference>
<dbReference type="PROSITE" id="PS51192">
    <property type="entry name" value="HELICASE_ATP_BIND_1"/>
    <property type="match status" value="1"/>
</dbReference>
<dbReference type="PROSITE" id="PS51194">
    <property type="entry name" value="HELICASE_CTER"/>
    <property type="match status" value="1"/>
</dbReference>
<dbReference type="PROSITE" id="PS51195">
    <property type="entry name" value="Q_MOTIF"/>
    <property type="match status" value="1"/>
</dbReference>
<accession>Q93ZG7</accession>
<accession>Q9SCQ0</accession>
<organism>
    <name type="scientific">Arabidopsis thaliana</name>
    <name type="common">Mouse-ear cress</name>
    <dbReference type="NCBI Taxonomy" id="3702"/>
    <lineage>
        <taxon>Eukaryota</taxon>
        <taxon>Viridiplantae</taxon>
        <taxon>Streptophyta</taxon>
        <taxon>Embryophyta</taxon>
        <taxon>Tracheophyta</taxon>
        <taxon>Spermatophyta</taxon>
        <taxon>Magnoliopsida</taxon>
        <taxon>eudicotyledons</taxon>
        <taxon>Gunneridae</taxon>
        <taxon>Pentapetalae</taxon>
        <taxon>rosids</taxon>
        <taxon>malvids</taxon>
        <taxon>Brassicales</taxon>
        <taxon>Brassicaceae</taxon>
        <taxon>Camelineae</taxon>
        <taxon>Arabidopsis</taxon>
    </lineage>
</organism>
<comment type="function">
    <text evidence="4 5">ATP-dependent RNA helicase essential for mRNA export from the nucleus. Plays an important role in the positive regulation of CBF/DREB transcription factors.</text>
</comment>
<comment type="catalytic activity">
    <reaction>
        <text>ATP + H2O = ADP + phosphate + H(+)</text>
        <dbReference type="Rhea" id="RHEA:13065"/>
        <dbReference type="ChEBI" id="CHEBI:15377"/>
        <dbReference type="ChEBI" id="CHEBI:15378"/>
        <dbReference type="ChEBI" id="CHEBI:30616"/>
        <dbReference type="ChEBI" id="CHEBI:43474"/>
        <dbReference type="ChEBI" id="CHEBI:456216"/>
        <dbReference type="EC" id="3.6.4.13"/>
    </reaction>
</comment>
<comment type="subunit">
    <text evidence="6">Interacts with NUP214 (via N-terminus).</text>
</comment>
<comment type="subcellular location">
    <subcellularLocation>
        <location evidence="4">Cytoplasm</location>
    </subcellularLocation>
    <subcellularLocation>
        <location evidence="4">Nucleus</location>
    </subcellularLocation>
</comment>
<comment type="tissue specificity">
    <text evidence="5">Constitutively expressed.</text>
</comment>
<comment type="induction">
    <text>By abscisic acid (ABA).</text>
</comment>
<comment type="domain">
    <text>The Q motif is unique to and characteristic of the DEAD box family of RNA helicases and controls ATP binding and hydrolysis.</text>
</comment>
<comment type="similarity">
    <text evidence="7">Belongs to the DEAD box helicase family. DDX19/DBP5 subfamily.</text>
</comment>
<reference key="1">
    <citation type="journal article" date="2000" name="Nature">
        <title>Sequence and analysis of chromosome 3 of the plant Arabidopsis thaliana.</title>
        <authorList>
            <person name="Salanoubat M."/>
            <person name="Lemcke K."/>
            <person name="Rieger M."/>
            <person name="Ansorge W."/>
            <person name="Unseld M."/>
            <person name="Fartmann B."/>
            <person name="Valle G."/>
            <person name="Bloecker H."/>
            <person name="Perez-Alonso M."/>
            <person name="Obermaier B."/>
            <person name="Delseny M."/>
            <person name="Boutry M."/>
            <person name="Grivell L.A."/>
            <person name="Mache R."/>
            <person name="Puigdomenech P."/>
            <person name="De Simone V."/>
            <person name="Choisne N."/>
            <person name="Artiguenave F."/>
            <person name="Robert C."/>
            <person name="Brottier P."/>
            <person name="Wincker P."/>
            <person name="Cattolico L."/>
            <person name="Weissenbach J."/>
            <person name="Saurin W."/>
            <person name="Quetier F."/>
            <person name="Schaefer M."/>
            <person name="Mueller-Auer S."/>
            <person name="Gabel C."/>
            <person name="Fuchs M."/>
            <person name="Benes V."/>
            <person name="Wurmbach E."/>
            <person name="Drzonek H."/>
            <person name="Erfle H."/>
            <person name="Jordan N."/>
            <person name="Bangert S."/>
            <person name="Wiedelmann R."/>
            <person name="Kranz H."/>
            <person name="Voss H."/>
            <person name="Holland R."/>
            <person name="Brandt P."/>
            <person name="Nyakatura G."/>
            <person name="Vezzi A."/>
            <person name="D'Angelo M."/>
            <person name="Pallavicini A."/>
            <person name="Toppo S."/>
            <person name="Simionati B."/>
            <person name="Conrad A."/>
            <person name="Hornischer K."/>
            <person name="Kauer G."/>
            <person name="Loehnert T.-H."/>
            <person name="Nordsiek G."/>
            <person name="Reichelt J."/>
            <person name="Scharfe M."/>
            <person name="Schoen O."/>
            <person name="Bargues M."/>
            <person name="Terol J."/>
            <person name="Climent J."/>
            <person name="Navarro P."/>
            <person name="Collado C."/>
            <person name="Perez-Perez A."/>
            <person name="Ottenwaelder B."/>
            <person name="Duchemin D."/>
            <person name="Cooke R."/>
            <person name="Laudie M."/>
            <person name="Berger-Llauro C."/>
            <person name="Purnelle B."/>
            <person name="Masuy D."/>
            <person name="de Haan M."/>
            <person name="Maarse A.C."/>
            <person name="Alcaraz J.-P."/>
            <person name="Cottet A."/>
            <person name="Casacuberta E."/>
            <person name="Monfort A."/>
            <person name="Argiriou A."/>
            <person name="Flores M."/>
            <person name="Liguori R."/>
            <person name="Vitale D."/>
            <person name="Mannhaupt G."/>
            <person name="Haase D."/>
            <person name="Schoof H."/>
            <person name="Rudd S."/>
            <person name="Zaccaria P."/>
            <person name="Mewes H.-W."/>
            <person name="Mayer K.F.X."/>
            <person name="Kaul S."/>
            <person name="Town C.D."/>
            <person name="Koo H.L."/>
            <person name="Tallon L.J."/>
            <person name="Jenkins J."/>
            <person name="Rooney T."/>
            <person name="Rizzo M."/>
            <person name="Walts A."/>
            <person name="Utterback T."/>
            <person name="Fujii C.Y."/>
            <person name="Shea T.P."/>
            <person name="Creasy T.H."/>
            <person name="Haas B."/>
            <person name="Maiti R."/>
            <person name="Wu D."/>
            <person name="Peterson J."/>
            <person name="Van Aken S."/>
            <person name="Pai G."/>
            <person name="Militscher J."/>
            <person name="Sellers P."/>
            <person name="Gill J.E."/>
            <person name="Feldblyum T.V."/>
            <person name="Preuss D."/>
            <person name="Lin X."/>
            <person name="Nierman W.C."/>
            <person name="Salzberg S.L."/>
            <person name="White O."/>
            <person name="Venter J.C."/>
            <person name="Fraser C.M."/>
            <person name="Kaneko T."/>
            <person name="Nakamura Y."/>
            <person name="Sato S."/>
            <person name="Kato T."/>
            <person name="Asamizu E."/>
            <person name="Sasamoto S."/>
            <person name="Kimura T."/>
            <person name="Idesawa K."/>
            <person name="Kawashima K."/>
            <person name="Kishida Y."/>
            <person name="Kiyokawa C."/>
            <person name="Kohara M."/>
            <person name="Matsumoto M."/>
            <person name="Matsuno A."/>
            <person name="Muraki A."/>
            <person name="Nakayama S."/>
            <person name="Nakazaki N."/>
            <person name="Shinpo S."/>
            <person name="Takeuchi C."/>
            <person name="Wada T."/>
            <person name="Watanabe A."/>
            <person name="Yamada M."/>
            <person name="Yasuda M."/>
            <person name="Tabata S."/>
        </authorList>
    </citation>
    <scope>NUCLEOTIDE SEQUENCE [LARGE SCALE GENOMIC DNA]</scope>
    <source>
        <strain>cv. Columbia</strain>
    </source>
</reference>
<reference key="2">
    <citation type="journal article" date="2017" name="Plant J.">
        <title>Araport11: a complete reannotation of the Arabidopsis thaliana reference genome.</title>
        <authorList>
            <person name="Cheng C.Y."/>
            <person name="Krishnakumar V."/>
            <person name="Chan A.P."/>
            <person name="Thibaud-Nissen F."/>
            <person name="Schobel S."/>
            <person name="Town C.D."/>
        </authorList>
    </citation>
    <scope>GENOME REANNOTATION</scope>
    <source>
        <strain>cv. Columbia</strain>
    </source>
</reference>
<reference key="3">
    <citation type="journal article" date="2003" name="Science">
        <title>Empirical analysis of transcriptional activity in the Arabidopsis genome.</title>
        <authorList>
            <person name="Yamada K."/>
            <person name="Lim J."/>
            <person name="Dale J.M."/>
            <person name="Chen H."/>
            <person name="Shinn P."/>
            <person name="Palm C.J."/>
            <person name="Southwick A.M."/>
            <person name="Wu H.C."/>
            <person name="Kim C.J."/>
            <person name="Nguyen M."/>
            <person name="Pham P.K."/>
            <person name="Cheuk R.F."/>
            <person name="Karlin-Newmann G."/>
            <person name="Liu S.X."/>
            <person name="Lam B."/>
            <person name="Sakano H."/>
            <person name="Wu T."/>
            <person name="Yu G."/>
            <person name="Miranda M."/>
            <person name="Quach H.L."/>
            <person name="Tripp M."/>
            <person name="Chang C.H."/>
            <person name="Lee J.M."/>
            <person name="Toriumi M.J."/>
            <person name="Chan M.M."/>
            <person name="Tang C.C."/>
            <person name="Onodera C.S."/>
            <person name="Deng J.M."/>
            <person name="Akiyama K."/>
            <person name="Ansari Y."/>
            <person name="Arakawa T."/>
            <person name="Banh J."/>
            <person name="Banno F."/>
            <person name="Bowser L."/>
            <person name="Brooks S.Y."/>
            <person name="Carninci P."/>
            <person name="Chao Q."/>
            <person name="Choy N."/>
            <person name="Enju A."/>
            <person name="Goldsmith A.D."/>
            <person name="Gurjal M."/>
            <person name="Hansen N.F."/>
            <person name="Hayashizaki Y."/>
            <person name="Johnson-Hopson C."/>
            <person name="Hsuan V.W."/>
            <person name="Iida K."/>
            <person name="Karnes M."/>
            <person name="Khan S."/>
            <person name="Koesema E."/>
            <person name="Ishida J."/>
            <person name="Jiang P.X."/>
            <person name="Jones T."/>
            <person name="Kawai J."/>
            <person name="Kamiya A."/>
            <person name="Meyers C."/>
            <person name="Nakajima M."/>
            <person name="Narusaka M."/>
            <person name="Seki M."/>
            <person name="Sakurai T."/>
            <person name="Satou M."/>
            <person name="Tamse R."/>
            <person name="Vaysberg M."/>
            <person name="Wallender E.K."/>
            <person name="Wong C."/>
            <person name="Yamamura Y."/>
            <person name="Yuan S."/>
            <person name="Shinozaki K."/>
            <person name="Davis R.W."/>
            <person name="Theologis A."/>
            <person name="Ecker J.R."/>
        </authorList>
    </citation>
    <scope>NUCLEOTIDE SEQUENCE [LARGE SCALE MRNA]</scope>
    <source>
        <strain>cv. Columbia</strain>
    </source>
</reference>
<reference key="4">
    <citation type="journal article" date="2002" name="Proc. Natl. Acad. Sci. U.S.A.">
        <title>RNA helicase-like protein as an early regulator of transcription factors for plant chilling and freezing tolerance.</title>
        <authorList>
            <person name="Gong Z."/>
            <person name="Lee H."/>
            <person name="Xiong L."/>
            <person name="Jagendorf A."/>
            <person name="Stevenson B."/>
            <person name="Zhu J.-K."/>
        </authorList>
    </citation>
    <scope>FUNCTION</scope>
    <scope>SUBCELLULAR LOCATION</scope>
</reference>
<reference key="5">
    <citation type="journal article" date="2004" name="Plant Biotechnol. J.">
        <title>DEAD-box RNA helicases in Arabidopsis thaliana: establishing a link between quantitative expression, gene structure and evolution of a family of genes.</title>
        <authorList>
            <person name="Mingam A."/>
            <person name="Toffano-Nioche C."/>
            <person name="Brunaud V."/>
            <person name="Boudet N."/>
            <person name="Kreis M."/>
            <person name="Lecharny A."/>
        </authorList>
    </citation>
    <scope>GENE FAMILY</scope>
    <scope>NOMENCLATURE</scope>
</reference>
<reference key="6">
    <citation type="journal article" date="2005" name="Plant Cell">
        <title>A DEAD box RNA helicase is essential for mRNA export and important for development and stress responses in Arabidopsis.</title>
        <authorList>
            <person name="Gong Z."/>
            <person name="Dong C.-H."/>
            <person name="Lee H."/>
            <person name="Zhu J."/>
            <person name="Xiong L."/>
            <person name="Gong D."/>
            <person name="Stevenson B."/>
            <person name="Zhu J.-K."/>
        </authorList>
    </citation>
    <scope>FUNCTION</scope>
    <scope>TISSUE SPECIFICITY</scope>
</reference>
<reference key="7">
    <citation type="journal article" date="2012" name="Mol. Cell. Proteomics">
        <title>Comparative large-scale characterisation of plant vs. mammal proteins reveals similar and idiosyncratic N-alpha acetylation features.</title>
        <authorList>
            <person name="Bienvenut W.V."/>
            <person name="Sumpton D."/>
            <person name="Martinez A."/>
            <person name="Lilla S."/>
            <person name="Espagne C."/>
            <person name="Meinnel T."/>
            <person name="Giglione C."/>
        </authorList>
    </citation>
    <scope>ACETYLATION [LARGE SCALE ANALYSIS] AT ALA-2</scope>
    <scope>CLEAVAGE OF INITIATOR METHIONINE [LARGE SCALE ANALYSIS]</scope>
    <scope>IDENTIFICATION BY MASS SPECTROMETRY [LARGE SCALE ANALYSIS]</scope>
</reference>
<reference key="8">
    <citation type="journal article" date="2012" name="Plant Physiol.">
        <title>LONO1 encoding a nucleoporin is required for embryogenesis and seed viability in Arabidopsis.</title>
        <authorList>
            <person name="Braud C."/>
            <person name="Zheng W."/>
            <person name="Xiao W."/>
        </authorList>
    </citation>
    <scope>INTERACTION WITH NUP214</scope>
</reference>
<reference key="9">
    <citation type="journal article" date="2013" name="PLoS ONE">
        <title>Genome-wide comparative in silico analysis of the RNA helicase gene family in Zea mays and Glycine max: a comparison with Arabidopsis and Oryza sativa.</title>
        <authorList>
            <person name="Xu R."/>
            <person name="Zhang S."/>
            <person name="Huang J."/>
            <person name="Zheng C."/>
        </authorList>
    </citation>
    <scope>GENE FAMILY</scope>
</reference>
<gene>
    <name type="primary">RH38</name>
    <name type="synonym">LOS4</name>
    <name type="ordered locus">At3g53110</name>
    <name type="ORF">T4D2.40</name>
</gene>
<evidence type="ECO:0000255" key="1">
    <source>
        <dbReference type="PROSITE-ProRule" id="PRU00541"/>
    </source>
</evidence>
<evidence type="ECO:0000255" key="2">
    <source>
        <dbReference type="PROSITE-ProRule" id="PRU00542"/>
    </source>
</evidence>
<evidence type="ECO:0000256" key="3">
    <source>
        <dbReference type="SAM" id="MobiDB-lite"/>
    </source>
</evidence>
<evidence type="ECO:0000269" key="4">
    <source>
    </source>
</evidence>
<evidence type="ECO:0000269" key="5">
    <source>
    </source>
</evidence>
<evidence type="ECO:0000269" key="6">
    <source>
    </source>
</evidence>
<evidence type="ECO:0000305" key="7"/>
<evidence type="ECO:0007744" key="8">
    <source>
    </source>
</evidence>